<proteinExistence type="evidence at transcript level"/>
<feature type="chain" id="PRO_0000433919" description="IQ domain-containing protein IQM3">
    <location>
        <begin position="1"/>
        <end position="456"/>
    </location>
</feature>
<feature type="domain" description="IQ" evidence="2">
    <location>
        <begin position="46"/>
        <end position="75"/>
    </location>
</feature>
<feature type="region of interest" description="Disordered" evidence="3">
    <location>
        <begin position="315"/>
        <end position="358"/>
    </location>
</feature>
<feature type="sequence conflict" description="In Ref. 3; AAM78112." evidence="6" ref="3">
    <original>S</original>
    <variation>F</variation>
    <location>
        <position position="279"/>
    </location>
</feature>
<feature type="sequence conflict" description="In Ref. 3; AAM78112." evidence="6" ref="3">
    <original>LGFL</original>
    <variation>FGFF</variation>
    <location>
        <begin position="296"/>
        <end position="299"/>
    </location>
</feature>
<organism>
    <name type="scientific">Arabidopsis thaliana</name>
    <name type="common">Mouse-ear cress</name>
    <dbReference type="NCBI Taxonomy" id="3702"/>
    <lineage>
        <taxon>Eukaryota</taxon>
        <taxon>Viridiplantae</taxon>
        <taxon>Streptophyta</taxon>
        <taxon>Embryophyta</taxon>
        <taxon>Tracheophyta</taxon>
        <taxon>Spermatophyta</taxon>
        <taxon>Magnoliopsida</taxon>
        <taxon>eudicotyledons</taxon>
        <taxon>Gunneridae</taxon>
        <taxon>Pentapetalae</taxon>
        <taxon>rosids</taxon>
        <taxon>malvids</taxon>
        <taxon>Brassicales</taxon>
        <taxon>Brassicaceae</taxon>
        <taxon>Camelineae</taxon>
        <taxon>Arabidopsis</taxon>
    </lineage>
</organism>
<dbReference type="EMBL" id="AL132969">
    <property type="protein sequence ID" value="CAB86891.1"/>
    <property type="molecule type" value="Genomic_DNA"/>
</dbReference>
<dbReference type="EMBL" id="CP002686">
    <property type="protein sequence ID" value="AEE79002.1"/>
    <property type="molecule type" value="Genomic_DNA"/>
</dbReference>
<dbReference type="EMBL" id="AY125521">
    <property type="protein sequence ID" value="AAM78112.1"/>
    <property type="molecule type" value="mRNA"/>
</dbReference>
<dbReference type="EMBL" id="BT001053">
    <property type="protein sequence ID" value="AAN46807.1"/>
    <property type="molecule type" value="mRNA"/>
</dbReference>
<dbReference type="PIR" id="T47544">
    <property type="entry name" value="T47544"/>
</dbReference>
<dbReference type="RefSeq" id="NP_190855.1">
    <property type="nucleotide sequence ID" value="NM_115147.4"/>
</dbReference>
<dbReference type="FunCoup" id="Q9LFA4">
    <property type="interactions" value="74"/>
</dbReference>
<dbReference type="STRING" id="3702.Q9LFA4"/>
<dbReference type="iPTMnet" id="Q9LFA4"/>
<dbReference type="PaxDb" id="3702-AT3G52870.1"/>
<dbReference type="ProteomicsDB" id="228829"/>
<dbReference type="EnsemblPlants" id="AT3G52870.1">
    <property type="protein sequence ID" value="AT3G52870.1"/>
    <property type="gene ID" value="AT3G52870"/>
</dbReference>
<dbReference type="GeneID" id="824453"/>
<dbReference type="Gramene" id="AT3G52870.1">
    <property type="protein sequence ID" value="AT3G52870.1"/>
    <property type="gene ID" value="AT3G52870"/>
</dbReference>
<dbReference type="KEGG" id="ath:AT3G52870"/>
<dbReference type="Araport" id="AT3G52870"/>
<dbReference type="TAIR" id="AT3G52870"/>
<dbReference type="eggNOG" id="ENOG502QRIN">
    <property type="taxonomic scope" value="Eukaryota"/>
</dbReference>
<dbReference type="HOGENOM" id="CLU_026344_1_0_1"/>
<dbReference type="InParanoid" id="Q9LFA4"/>
<dbReference type="OMA" id="YDDYFKS"/>
<dbReference type="OrthoDB" id="7344096at2759"/>
<dbReference type="PhylomeDB" id="Q9LFA4"/>
<dbReference type="PRO" id="PR:Q9LFA4"/>
<dbReference type="Proteomes" id="UP000006548">
    <property type="component" value="Chromosome 3"/>
</dbReference>
<dbReference type="ExpressionAtlas" id="Q9LFA4">
    <property type="expression patterns" value="baseline and differential"/>
</dbReference>
<dbReference type="GO" id="GO:0005737">
    <property type="term" value="C:cytoplasm"/>
    <property type="evidence" value="ECO:0007669"/>
    <property type="project" value="UniProtKB-SubCell"/>
</dbReference>
<dbReference type="GO" id="GO:0005634">
    <property type="term" value="C:nucleus"/>
    <property type="evidence" value="ECO:0007669"/>
    <property type="project" value="UniProtKB-SubCell"/>
</dbReference>
<dbReference type="InterPro" id="IPR044159">
    <property type="entry name" value="IQM"/>
</dbReference>
<dbReference type="PANTHER" id="PTHR31250">
    <property type="entry name" value="IQ DOMAIN-CONTAINING PROTEIN IQM3"/>
    <property type="match status" value="1"/>
</dbReference>
<dbReference type="PANTHER" id="PTHR31250:SF10">
    <property type="entry name" value="IQ DOMAIN-CONTAINING PROTEIN IQM3"/>
    <property type="match status" value="1"/>
</dbReference>
<dbReference type="PROSITE" id="PS50096">
    <property type="entry name" value="IQ"/>
    <property type="match status" value="1"/>
</dbReference>
<accession>Q9LFA4</accession>
<accession>Q8L7V5</accession>
<gene>
    <name evidence="5" type="primary">IQM3</name>
    <name evidence="7" type="ordered locus">At3g52870</name>
    <name evidence="8" type="ORF">F8J2_40</name>
</gene>
<keyword id="KW-0963">Cytoplasm</keyword>
<keyword id="KW-0539">Nucleus</keyword>
<keyword id="KW-1185">Reference proteome</keyword>
<protein>
    <recommendedName>
        <fullName evidence="6">IQ domain-containing protein IQM3</fullName>
    </recommendedName>
    <alternativeName>
        <fullName evidence="5">IQ motif-containing protein 3</fullName>
    </alternativeName>
</protein>
<reference key="1">
    <citation type="journal article" date="2000" name="Nature">
        <title>Sequence and analysis of chromosome 3 of the plant Arabidopsis thaliana.</title>
        <authorList>
            <person name="Salanoubat M."/>
            <person name="Lemcke K."/>
            <person name="Rieger M."/>
            <person name="Ansorge W."/>
            <person name="Unseld M."/>
            <person name="Fartmann B."/>
            <person name="Valle G."/>
            <person name="Bloecker H."/>
            <person name="Perez-Alonso M."/>
            <person name="Obermaier B."/>
            <person name="Delseny M."/>
            <person name="Boutry M."/>
            <person name="Grivell L.A."/>
            <person name="Mache R."/>
            <person name="Puigdomenech P."/>
            <person name="De Simone V."/>
            <person name="Choisne N."/>
            <person name="Artiguenave F."/>
            <person name="Robert C."/>
            <person name="Brottier P."/>
            <person name="Wincker P."/>
            <person name="Cattolico L."/>
            <person name="Weissenbach J."/>
            <person name="Saurin W."/>
            <person name="Quetier F."/>
            <person name="Schaefer M."/>
            <person name="Mueller-Auer S."/>
            <person name="Gabel C."/>
            <person name="Fuchs M."/>
            <person name="Benes V."/>
            <person name="Wurmbach E."/>
            <person name="Drzonek H."/>
            <person name="Erfle H."/>
            <person name="Jordan N."/>
            <person name="Bangert S."/>
            <person name="Wiedelmann R."/>
            <person name="Kranz H."/>
            <person name="Voss H."/>
            <person name="Holland R."/>
            <person name="Brandt P."/>
            <person name="Nyakatura G."/>
            <person name="Vezzi A."/>
            <person name="D'Angelo M."/>
            <person name="Pallavicini A."/>
            <person name="Toppo S."/>
            <person name="Simionati B."/>
            <person name="Conrad A."/>
            <person name="Hornischer K."/>
            <person name="Kauer G."/>
            <person name="Loehnert T.-H."/>
            <person name="Nordsiek G."/>
            <person name="Reichelt J."/>
            <person name="Scharfe M."/>
            <person name="Schoen O."/>
            <person name="Bargues M."/>
            <person name="Terol J."/>
            <person name="Climent J."/>
            <person name="Navarro P."/>
            <person name="Collado C."/>
            <person name="Perez-Perez A."/>
            <person name="Ottenwaelder B."/>
            <person name="Duchemin D."/>
            <person name="Cooke R."/>
            <person name="Laudie M."/>
            <person name="Berger-Llauro C."/>
            <person name="Purnelle B."/>
            <person name="Masuy D."/>
            <person name="de Haan M."/>
            <person name="Maarse A.C."/>
            <person name="Alcaraz J.-P."/>
            <person name="Cottet A."/>
            <person name="Casacuberta E."/>
            <person name="Monfort A."/>
            <person name="Argiriou A."/>
            <person name="Flores M."/>
            <person name="Liguori R."/>
            <person name="Vitale D."/>
            <person name="Mannhaupt G."/>
            <person name="Haase D."/>
            <person name="Schoof H."/>
            <person name="Rudd S."/>
            <person name="Zaccaria P."/>
            <person name="Mewes H.-W."/>
            <person name="Mayer K.F.X."/>
            <person name="Kaul S."/>
            <person name="Town C.D."/>
            <person name="Koo H.L."/>
            <person name="Tallon L.J."/>
            <person name="Jenkins J."/>
            <person name="Rooney T."/>
            <person name="Rizzo M."/>
            <person name="Walts A."/>
            <person name="Utterback T."/>
            <person name="Fujii C.Y."/>
            <person name="Shea T.P."/>
            <person name="Creasy T.H."/>
            <person name="Haas B."/>
            <person name="Maiti R."/>
            <person name="Wu D."/>
            <person name="Peterson J."/>
            <person name="Van Aken S."/>
            <person name="Pai G."/>
            <person name="Militscher J."/>
            <person name="Sellers P."/>
            <person name="Gill J.E."/>
            <person name="Feldblyum T.V."/>
            <person name="Preuss D."/>
            <person name="Lin X."/>
            <person name="Nierman W.C."/>
            <person name="Salzberg S.L."/>
            <person name="White O."/>
            <person name="Venter J.C."/>
            <person name="Fraser C.M."/>
            <person name="Kaneko T."/>
            <person name="Nakamura Y."/>
            <person name="Sato S."/>
            <person name="Kato T."/>
            <person name="Asamizu E."/>
            <person name="Sasamoto S."/>
            <person name="Kimura T."/>
            <person name="Idesawa K."/>
            <person name="Kawashima K."/>
            <person name="Kishida Y."/>
            <person name="Kiyokawa C."/>
            <person name="Kohara M."/>
            <person name="Matsumoto M."/>
            <person name="Matsuno A."/>
            <person name="Muraki A."/>
            <person name="Nakayama S."/>
            <person name="Nakazaki N."/>
            <person name="Shinpo S."/>
            <person name="Takeuchi C."/>
            <person name="Wada T."/>
            <person name="Watanabe A."/>
            <person name="Yamada M."/>
            <person name="Yasuda M."/>
            <person name="Tabata S."/>
        </authorList>
    </citation>
    <scope>NUCLEOTIDE SEQUENCE [LARGE SCALE GENOMIC DNA]</scope>
    <source>
        <strain>cv. Columbia</strain>
    </source>
</reference>
<reference key="2">
    <citation type="journal article" date="2017" name="Plant J.">
        <title>Araport11: a complete reannotation of the Arabidopsis thaliana reference genome.</title>
        <authorList>
            <person name="Cheng C.Y."/>
            <person name="Krishnakumar V."/>
            <person name="Chan A.P."/>
            <person name="Thibaud-Nissen F."/>
            <person name="Schobel S."/>
            <person name="Town C.D."/>
        </authorList>
    </citation>
    <scope>GENOME REANNOTATION</scope>
    <source>
        <strain>cv. Columbia</strain>
    </source>
</reference>
<reference key="3">
    <citation type="journal article" date="2003" name="Science">
        <title>Empirical analysis of transcriptional activity in the Arabidopsis genome.</title>
        <authorList>
            <person name="Yamada K."/>
            <person name="Lim J."/>
            <person name="Dale J.M."/>
            <person name="Chen H."/>
            <person name="Shinn P."/>
            <person name="Palm C.J."/>
            <person name="Southwick A.M."/>
            <person name="Wu H.C."/>
            <person name="Kim C.J."/>
            <person name="Nguyen M."/>
            <person name="Pham P.K."/>
            <person name="Cheuk R.F."/>
            <person name="Karlin-Newmann G."/>
            <person name="Liu S.X."/>
            <person name="Lam B."/>
            <person name="Sakano H."/>
            <person name="Wu T."/>
            <person name="Yu G."/>
            <person name="Miranda M."/>
            <person name="Quach H.L."/>
            <person name="Tripp M."/>
            <person name="Chang C.H."/>
            <person name="Lee J.M."/>
            <person name="Toriumi M.J."/>
            <person name="Chan M.M."/>
            <person name="Tang C.C."/>
            <person name="Onodera C.S."/>
            <person name="Deng J.M."/>
            <person name="Akiyama K."/>
            <person name="Ansari Y."/>
            <person name="Arakawa T."/>
            <person name="Banh J."/>
            <person name="Banno F."/>
            <person name="Bowser L."/>
            <person name="Brooks S.Y."/>
            <person name="Carninci P."/>
            <person name="Chao Q."/>
            <person name="Choy N."/>
            <person name="Enju A."/>
            <person name="Goldsmith A.D."/>
            <person name="Gurjal M."/>
            <person name="Hansen N.F."/>
            <person name="Hayashizaki Y."/>
            <person name="Johnson-Hopson C."/>
            <person name="Hsuan V.W."/>
            <person name="Iida K."/>
            <person name="Karnes M."/>
            <person name="Khan S."/>
            <person name="Koesema E."/>
            <person name="Ishida J."/>
            <person name="Jiang P.X."/>
            <person name="Jones T."/>
            <person name="Kawai J."/>
            <person name="Kamiya A."/>
            <person name="Meyers C."/>
            <person name="Nakajima M."/>
            <person name="Narusaka M."/>
            <person name="Seki M."/>
            <person name="Sakurai T."/>
            <person name="Satou M."/>
            <person name="Tamse R."/>
            <person name="Vaysberg M."/>
            <person name="Wallender E.K."/>
            <person name="Wong C."/>
            <person name="Yamamura Y."/>
            <person name="Yuan S."/>
            <person name="Shinozaki K."/>
            <person name="Davis R.W."/>
            <person name="Theologis A."/>
            <person name="Ecker J.R."/>
        </authorList>
    </citation>
    <scope>NUCLEOTIDE SEQUENCE [LARGE SCALE MRNA]</scope>
    <source>
        <strain>cv. Columbia</strain>
    </source>
</reference>
<reference key="4">
    <citation type="journal article" date="2010" name="Acta Physiol. Plant.">
        <title>Sequence and expression analysis of the Arabidopsis IQM family.</title>
        <authorList>
            <person name="Zhou Y."/>
            <person name="Chen Y."/>
            <person name="Yamamoto K.T."/>
            <person name="Duan J."/>
            <person name="Tian C."/>
        </authorList>
    </citation>
    <scope>GENE FAMILY</scope>
    <scope>NOMENCLATURE</scope>
    <scope>TISSUE SPECIFICITY</scope>
    <scope>INDUCTION</scope>
</reference>
<name>IQM3_ARATH</name>
<evidence type="ECO:0000250" key="1">
    <source>
        <dbReference type="UniProtKB" id="O82645"/>
    </source>
</evidence>
<evidence type="ECO:0000255" key="2">
    <source>
        <dbReference type="PROSITE-ProRule" id="PRU00116"/>
    </source>
</evidence>
<evidence type="ECO:0000256" key="3">
    <source>
        <dbReference type="SAM" id="MobiDB-lite"/>
    </source>
</evidence>
<evidence type="ECO:0000269" key="4">
    <source ref="4"/>
</evidence>
<evidence type="ECO:0000303" key="5">
    <source ref="4"/>
</evidence>
<evidence type="ECO:0000305" key="6"/>
<evidence type="ECO:0000312" key="7">
    <source>
        <dbReference type="Araport" id="AT3G52870"/>
    </source>
</evidence>
<evidence type="ECO:0000312" key="8">
    <source>
        <dbReference type="EMBL" id="CAB86891.1"/>
    </source>
</evidence>
<sequence length="456" mass="51155">MQVVSSFDFQSSPFSHGAGEILISPVDHRELSSHGDALEGACDDSTRLAAVKVQKVYRSYRTRRRLADSVVVAEELWWQAMDYARLNHSTISFFDYSRPETAVSRWNRVSLNASKVGKGLSIVDKAQKLAFQHWIEAIDPRHRYGHNLHKYYEEWCKADAGQPFFYWLDVGGGIDLDLNECPRSKLKQQCIRYLGPQEREEYEYVIIEGKIVHKLTGKFLHTMHGSEGTKWIFVMSTFKKLYAGLKKKGRFHHSSFLAGGATLAAGRVIVDNGVLKTISAYSGHYRPSDDSLDTFLGFLRENAVNLDNVEVHKASEDSDSYDDYVKSNGGSEPEPLKKEDTTFQAETETDENGNGTVGTLEEAKRSSYQRTLSGGLGSPKANVPQKSMLLRINSKKQSRSLQLGHQLSLKWSTGVGPRIGCAADYPVQLRTQALEFVNLSPKYRSSRLSPTGKLDV</sequence>
<comment type="function">
    <text evidence="1">May be involved in biotic and abiotic stress responses.</text>
</comment>
<comment type="subcellular location">
    <subcellularLocation>
        <location evidence="1">Cytoplasm</location>
    </subcellularLocation>
    <subcellularLocation>
        <location evidence="1">Nucleus</location>
    </subcellularLocation>
</comment>
<comment type="tissue specificity">
    <text evidence="4">Expressed in roots, rosette and cauline leaves, flowers and siliques, and at lower levels in stems.</text>
</comment>
<comment type="induction">
    <text evidence="4">By cadmium and lead. Down-regulated by salt stress.</text>
</comment>